<organism>
    <name type="scientific">Geobacter sp. (strain M21)</name>
    <dbReference type="NCBI Taxonomy" id="443144"/>
    <lineage>
        <taxon>Bacteria</taxon>
        <taxon>Pseudomonadati</taxon>
        <taxon>Thermodesulfobacteriota</taxon>
        <taxon>Desulfuromonadia</taxon>
        <taxon>Geobacterales</taxon>
        <taxon>Geobacteraceae</taxon>
        <taxon>Geobacter</taxon>
    </lineage>
</organism>
<protein>
    <recommendedName>
        <fullName evidence="1">UPF0182 protein GM21_2279</fullName>
    </recommendedName>
</protein>
<feature type="chain" id="PRO_1000215682" description="UPF0182 protein GM21_2279">
    <location>
        <begin position="1"/>
        <end position="896"/>
    </location>
</feature>
<feature type="transmembrane region" description="Helical" evidence="1">
    <location>
        <begin position="6"/>
        <end position="26"/>
    </location>
</feature>
<feature type="transmembrane region" description="Helical" evidence="1">
    <location>
        <begin position="46"/>
        <end position="66"/>
    </location>
</feature>
<feature type="transmembrane region" description="Helical" evidence="1">
    <location>
        <begin position="99"/>
        <end position="119"/>
    </location>
</feature>
<feature type="transmembrane region" description="Helical" evidence="1">
    <location>
        <begin position="158"/>
        <end position="180"/>
    </location>
</feature>
<feature type="transmembrane region" description="Helical" evidence="1">
    <location>
        <begin position="201"/>
        <end position="221"/>
    </location>
</feature>
<feature type="transmembrane region" description="Helical" evidence="1">
    <location>
        <begin position="245"/>
        <end position="265"/>
    </location>
</feature>
<feature type="transmembrane region" description="Helical" evidence="1">
    <location>
        <begin position="271"/>
        <end position="291"/>
    </location>
</feature>
<name>Y2279_GEOSM</name>
<dbReference type="EMBL" id="CP001661">
    <property type="protein sequence ID" value="ACT18328.1"/>
    <property type="molecule type" value="Genomic_DNA"/>
</dbReference>
<dbReference type="SMR" id="C6DYP4"/>
<dbReference type="STRING" id="443144.GM21_2279"/>
<dbReference type="KEGG" id="gem:GM21_2279"/>
<dbReference type="eggNOG" id="COG1615">
    <property type="taxonomic scope" value="Bacteria"/>
</dbReference>
<dbReference type="HOGENOM" id="CLU_007733_0_0_7"/>
<dbReference type="OrthoDB" id="9763654at2"/>
<dbReference type="GO" id="GO:0005576">
    <property type="term" value="C:extracellular region"/>
    <property type="evidence" value="ECO:0007669"/>
    <property type="project" value="TreeGrafter"/>
</dbReference>
<dbReference type="GO" id="GO:0005886">
    <property type="term" value="C:plasma membrane"/>
    <property type="evidence" value="ECO:0007669"/>
    <property type="project" value="UniProtKB-SubCell"/>
</dbReference>
<dbReference type="HAMAP" id="MF_01600">
    <property type="entry name" value="UPF0182"/>
    <property type="match status" value="1"/>
</dbReference>
<dbReference type="InterPro" id="IPR005372">
    <property type="entry name" value="UPF0182"/>
</dbReference>
<dbReference type="PANTHER" id="PTHR39344">
    <property type="entry name" value="UPF0182 PROTEIN SLL1060"/>
    <property type="match status" value="1"/>
</dbReference>
<dbReference type="PANTHER" id="PTHR39344:SF1">
    <property type="entry name" value="UPF0182 PROTEIN SLL1060"/>
    <property type="match status" value="1"/>
</dbReference>
<dbReference type="Pfam" id="PF03699">
    <property type="entry name" value="UPF0182"/>
    <property type="match status" value="1"/>
</dbReference>
<reference key="1">
    <citation type="submission" date="2009-07" db="EMBL/GenBank/DDBJ databases">
        <title>Complete sequence of Geobacter sp. M21.</title>
        <authorList>
            <consortium name="US DOE Joint Genome Institute"/>
            <person name="Lucas S."/>
            <person name="Copeland A."/>
            <person name="Lapidus A."/>
            <person name="Glavina del Rio T."/>
            <person name="Dalin E."/>
            <person name="Tice H."/>
            <person name="Bruce D."/>
            <person name="Goodwin L."/>
            <person name="Pitluck S."/>
            <person name="Saunders E."/>
            <person name="Brettin T."/>
            <person name="Detter J.C."/>
            <person name="Han C."/>
            <person name="Larimer F."/>
            <person name="Land M."/>
            <person name="Hauser L."/>
            <person name="Kyrpides N."/>
            <person name="Ovchinnikova G."/>
            <person name="Lovley D."/>
        </authorList>
    </citation>
    <scope>NUCLEOTIDE SEQUENCE [LARGE SCALE GENOMIC DNA]</scope>
    <source>
        <strain>M21</strain>
    </source>
</reference>
<sequence>MLKHRMTFILVAIAVIFPFIGYLLSFYTDWLFFAETGFSSVFMTTVYAQTGAGLIFGLLLFAFLQLNLHYANKGSFPLSGIYIVGGGDIRINRNEAGRLVRPVGILISLVLAFLAGNWGAMRWEDLLLFANRVTVGMADPVLGKDVGFYLFSLPFVELLKSFAGFMVLAASVLSAAAYYVKGGITLDDRGAGVDPRVRRHLAVLVGLFGLVVAAGFYLESFSLLLSNNGAFHGAGYVDVHGRLMTLRILTFLTPVAGVVLALGIWRGDWRLALGPPVVIVALYLVGVRVYPGLLQKFKVAPNELTLETPYLENHLKFTRYGYDLDKIETVPFDVDTKLSAADIANNDATIKNIRLWDHAPLLKTYSQLQQIRTYYKFFDVDNDRYMVNGQYSQVMLSPRELSYADLPSKNWINERLIFTHGNGITFGPVSRISKEGLPEFFVKDIPAVSLADIKVTRPEIYYGELSNEYVVVKTKVPEFSYPTATGNINTTYAGKGGVPIDSLLKKALFAAQFKTEKILLSSDITPESRIIYNRNIKERVRTIAPFLSFDVDPYMVVDDGGKLKWIVDAYTFSGRLPYSRPVQGGMNYLRNSVKVVVDAYDGTVSFYVSDAQDVMVKVYSRIFPGLFQPISAMPADLRKHVRYPNQYLQVQAAMFAAYHMTDPKVFYNKENLWQVPTLGEKPMEPYYTIMKLPGEKVEEYILLLPFTPSKRDNLAAWLTARCDGENYGKIRAYTFPRDRLIYGPKQIDARINQDSFISQQLTLWSQRGSEVIRGSLLVIPIEKSLLYVQPLFLAADKAGLPELKRVIVAFGDEVVMEENLELALQRLFGARKSIGTAAAAAAPPGAPAAAGQPASSLAKEAMSIYQRALNLQRQGDWSGYGEELRKLEQVLKRMAQ</sequence>
<keyword id="KW-1003">Cell membrane</keyword>
<keyword id="KW-0472">Membrane</keyword>
<keyword id="KW-0812">Transmembrane</keyword>
<keyword id="KW-1133">Transmembrane helix</keyword>
<gene>
    <name type="ordered locus">GM21_2279</name>
</gene>
<comment type="subcellular location">
    <subcellularLocation>
        <location evidence="1">Cell membrane</location>
        <topology evidence="1">Multi-pass membrane protein</topology>
    </subcellularLocation>
</comment>
<comment type="similarity">
    <text evidence="1">Belongs to the UPF0182 family.</text>
</comment>
<accession>C6DYP4</accession>
<evidence type="ECO:0000255" key="1">
    <source>
        <dbReference type="HAMAP-Rule" id="MF_01600"/>
    </source>
</evidence>
<proteinExistence type="inferred from homology"/>